<gene>
    <name type="ordered locus">SAUSA300_1608</name>
</gene>
<accession>Q2FG75</accession>
<comment type="similarity">
    <text evidence="2">Belongs to the UPF0758 family.</text>
</comment>
<name>Y1608_STAA3</name>
<dbReference type="EMBL" id="CP000255">
    <property type="protein sequence ID" value="ABD22209.1"/>
    <property type="molecule type" value="Genomic_DNA"/>
</dbReference>
<dbReference type="SMR" id="Q2FG75"/>
<dbReference type="KEGG" id="saa:SAUSA300_1608"/>
<dbReference type="HOGENOM" id="CLU_073529_0_2_9"/>
<dbReference type="Proteomes" id="UP000001939">
    <property type="component" value="Chromosome"/>
</dbReference>
<dbReference type="GO" id="GO:0046872">
    <property type="term" value="F:metal ion binding"/>
    <property type="evidence" value="ECO:0007669"/>
    <property type="project" value="UniProtKB-KW"/>
</dbReference>
<dbReference type="GO" id="GO:0008237">
    <property type="term" value="F:metallopeptidase activity"/>
    <property type="evidence" value="ECO:0007669"/>
    <property type="project" value="UniProtKB-KW"/>
</dbReference>
<dbReference type="GO" id="GO:0006508">
    <property type="term" value="P:proteolysis"/>
    <property type="evidence" value="ECO:0007669"/>
    <property type="project" value="UniProtKB-KW"/>
</dbReference>
<dbReference type="CDD" id="cd08071">
    <property type="entry name" value="MPN_DUF2466"/>
    <property type="match status" value="1"/>
</dbReference>
<dbReference type="Gene3D" id="3.40.140.10">
    <property type="entry name" value="Cytidine Deaminase, domain 2"/>
    <property type="match status" value="1"/>
</dbReference>
<dbReference type="InterPro" id="IPR037518">
    <property type="entry name" value="MPN"/>
</dbReference>
<dbReference type="InterPro" id="IPR025657">
    <property type="entry name" value="RadC_JAB"/>
</dbReference>
<dbReference type="InterPro" id="IPR010994">
    <property type="entry name" value="RuvA_2-like"/>
</dbReference>
<dbReference type="InterPro" id="IPR001405">
    <property type="entry name" value="UPF0758"/>
</dbReference>
<dbReference type="InterPro" id="IPR020891">
    <property type="entry name" value="UPF0758_CS"/>
</dbReference>
<dbReference type="InterPro" id="IPR046778">
    <property type="entry name" value="UPF0758_N"/>
</dbReference>
<dbReference type="NCBIfam" id="NF000642">
    <property type="entry name" value="PRK00024.1"/>
    <property type="match status" value="1"/>
</dbReference>
<dbReference type="NCBIfam" id="TIGR00608">
    <property type="entry name" value="radc"/>
    <property type="match status" value="1"/>
</dbReference>
<dbReference type="PANTHER" id="PTHR30471">
    <property type="entry name" value="DNA REPAIR PROTEIN RADC"/>
    <property type="match status" value="1"/>
</dbReference>
<dbReference type="PANTHER" id="PTHR30471:SF3">
    <property type="entry name" value="UPF0758 PROTEIN YEES-RELATED"/>
    <property type="match status" value="1"/>
</dbReference>
<dbReference type="Pfam" id="PF04002">
    <property type="entry name" value="RadC"/>
    <property type="match status" value="1"/>
</dbReference>
<dbReference type="Pfam" id="PF20582">
    <property type="entry name" value="UPF0758_N"/>
    <property type="match status" value="1"/>
</dbReference>
<dbReference type="SUPFAM" id="SSF102712">
    <property type="entry name" value="JAB1/MPN domain"/>
    <property type="match status" value="1"/>
</dbReference>
<dbReference type="SUPFAM" id="SSF47781">
    <property type="entry name" value="RuvA domain 2-like"/>
    <property type="match status" value="1"/>
</dbReference>
<dbReference type="PROSITE" id="PS50249">
    <property type="entry name" value="MPN"/>
    <property type="match status" value="1"/>
</dbReference>
<dbReference type="PROSITE" id="PS01302">
    <property type="entry name" value="UPF0758"/>
    <property type="match status" value="1"/>
</dbReference>
<keyword id="KW-0378">Hydrolase</keyword>
<keyword id="KW-0479">Metal-binding</keyword>
<keyword id="KW-0482">Metalloprotease</keyword>
<keyword id="KW-0645">Protease</keyword>
<keyword id="KW-0862">Zinc</keyword>
<reference key="1">
    <citation type="journal article" date="2006" name="Lancet">
        <title>Complete genome sequence of USA300, an epidemic clone of community-acquired meticillin-resistant Staphylococcus aureus.</title>
        <authorList>
            <person name="Diep B.A."/>
            <person name="Gill S.R."/>
            <person name="Chang R.F."/>
            <person name="Phan T.H."/>
            <person name="Chen J.H."/>
            <person name="Davidson M.G."/>
            <person name="Lin F."/>
            <person name="Lin J."/>
            <person name="Carleton H.A."/>
            <person name="Mongodin E.F."/>
            <person name="Sensabaugh G.F."/>
            <person name="Perdreau-Remington F."/>
        </authorList>
    </citation>
    <scope>NUCLEOTIDE SEQUENCE [LARGE SCALE GENOMIC DNA]</scope>
    <source>
        <strain>USA300</strain>
    </source>
</reference>
<protein>
    <recommendedName>
        <fullName>UPF0758 protein SAUSA300_1608</fullName>
    </recommendedName>
</protein>
<evidence type="ECO:0000255" key="1">
    <source>
        <dbReference type="PROSITE-ProRule" id="PRU01182"/>
    </source>
</evidence>
<evidence type="ECO:0000305" key="2"/>
<proteinExistence type="inferred from homology"/>
<feature type="chain" id="PRO_1000089848" description="UPF0758 protein SAUSA300_1608">
    <location>
        <begin position="1"/>
        <end position="218"/>
    </location>
</feature>
<feature type="domain" description="MPN" evidence="1">
    <location>
        <begin position="92"/>
        <end position="214"/>
    </location>
</feature>
<feature type="short sequence motif" description="JAMM motif" evidence="1">
    <location>
        <begin position="163"/>
        <end position="176"/>
    </location>
</feature>
<feature type="binding site" evidence="1">
    <location>
        <position position="163"/>
    </location>
    <ligand>
        <name>Zn(2+)</name>
        <dbReference type="ChEBI" id="CHEBI:29105"/>
        <note>catalytic</note>
    </ligand>
</feature>
<feature type="binding site" evidence="1">
    <location>
        <position position="165"/>
    </location>
    <ligand>
        <name>Zn(2+)</name>
        <dbReference type="ChEBI" id="CHEBI:29105"/>
        <note>catalytic</note>
    </ligand>
</feature>
<feature type="binding site" evidence="1">
    <location>
        <position position="176"/>
    </location>
    <ligand>
        <name>Zn(2+)</name>
        <dbReference type="ChEBI" id="CHEBI:29105"/>
        <note>catalytic</note>
    </ligand>
</feature>
<organism>
    <name type="scientific">Staphylococcus aureus (strain USA300)</name>
    <dbReference type="NCBI Taxonomy" id="367830"/>
    <lineage>
        <taxon>Bacteria</taxon>
        <taxon>Bacillati</taxon>
        <taxon>Bacillota</taxon>
        <taxon>Bacilli</taxon>
        <taxon>Bacillales</taxon>
        <taxon>Staphylococcaceae</taxon>
        <taxon>Staphylococcus</taxon>
    </lineage>
</organism>
<sequence>MPRERLLSHGAKSLSNTELLAILINTGRKGFSSIDISNELLKSASNLNELKKSSINDLIKVKGIGLQKAITLKAAFELGERMGRRAENNRIKITQPSDVADYMIPTMKDLTQEHFVILLLNSKNVVIKETCVFKGTLNSSIVHPREIFSIAVRENANAIIAVHNHPSGDVTPSQEDIITTMRLKECGLILGIDLLDHIIIGDNRFTSLVEAGYFDEND</sequence>